<sequence length="308" mass="32796">MFNGEPGPASSGASRNVVRSSSISGEICGSQQAGGGAGTTTAKKRRSSLGAKMVAIVGLTQWSKSTLQLPQPEGATKKLRSNIRRSTETGIAVEMRSRVTRQGSRESTDGSTNSNSSDGTFIFPTTRLGAESQFSDFLDGLGPAQIVGRQTLATPPMGDVHIAIMDRSGQLEVEVIEARGLTPKPGSKSLPATYIKVYLLENGACLAKKKTKMTKKTCDPLYQQALLFDEGPQGKVLQVIVWGDYGRMDHKCFMGMAQIMLDELDLSAAVTGWYKLFPTSSVADSTLGSLTRRLSQSSLESATSPSCS</sequence>
<name>RIMS3_HUMAN</name>
<comment type="function">
    <text evidence="1">Regulates synaptic membrane exocytosis.</text>
</comment>
<comment type="subunit">
    <text evidence="1">Binds PPFIA3 (By similarity). Does not bind RAB3.</text>
</comment>
<comment type="interaction">
    <interactant intactId="EBI-3909436">
        <id>Q9UJD0</id>
    </interactant>
    <interactant intactId="EBI-10200977">
        <id>P21964-2</id>
        <label>COMT</label>
    </interactant>
    <organismsDiffer>false</organismsDiffer>
    <experiments>3</experiments>
</comment>
<comment type="interaction">
    <interactant intactId="EBI-3909436">
        <id>Q9UJD0</id>
    </interactant>
    <interactant intactId="EBI-8561769">
        <id>Q5SUL5</id>
        <label>HLA-A</label>
    </interactant>
    <organismsDiffer>false</organismsDiffer>
    <experiments>3</experiments>
</comment>
<comment type="interaction">
    <interactant intactId="EBI-3909436">
        <id>Q9UJD0</id>
    </interactant>
    <interactant intactId="EBI-399080">
        <id>Q92993</id>
        <label>KAT5</label>
    </interactant>
    <organismsDiffer>false</organismsDiffer>
    <experiments>3</experiments>
</comment>
<comment type="interaction">
    <interactant intactId="EBI-3909436">
        <id>Q9UJD0</id>
    </interactant>
    <interactant intactId="EBI-11742507">
        <id>Q8TAP4-4</id>
        <label>LMO3</label>
    </interactant>
    <organismsDiffer>false</organismsDiffer>
    <experiments>3</experiments>
</comment>
<comment type="interaction">
    <interactant intactId="EBI-3909436">
        <id>Q9UJD0</id>
    </interactant>
    <interactant intactId="EBI-16439278">
        <id>Q6FHY5</id>
        <label>MEOX2</label>
    </interactant>
    <organismsDiffer>false</organismsDiffer>
    <experiments>3</experiments>
</comment>
<comment type="interaction">
    <interactant intactId="EBI-3909436">
        <id>Q9UJD0</id>
    </interactant>
    <interactant intactId="EBI-716404">
        <id>P16284</id>
        <label>PECAM1</label>
    </interactant>
    <organismsDiffer>false</organismsDiffer>
    <experiments>3</experiments>
</comment>
<comment type="interaction">
    <interactant intactId="EBI-3909436">
        <id>Q9UJD0</id>
    </interactant>
    <interactant intactId="EBI-79165">
        <id>Q9NRD5</id>
        <label>PICK1</label>
    </interactant>
    <organismsDiffer>false</organismsDiffer>
    <experiments>3</experiments>
</comment>
<comment type="interaction">
    <interactant intactId="EBI-3909436">
        <id>Q9UJD0</id>
    </interactant>
    <interactant intactId="EBI-9090795">
        <id>Q15047-2</id>
        <label>SETDB1</label>
    </interactant>
    <organismsDiffer>false</organismsDiffer>
    <experiments>3</experiments>
</comment>
<comment type="interaction">
    <interactant intactId="EBI-3909436">
        <id>Q9UJD0</id>
    </interactant>
    <interactant intactId="EBI-353844">
        <id>P08670</id>
        <label>VIM</label>
    </interactant>
    <organismsDiffer>false</organismsDiffer>
    <experiments>3</experiments>
</comment>
<comment type="interaction">
    <interactant intactId="EBI-3909436">
        <id>Q9UJD0</id>
    </interactant>
    <interactant intactId="EBI-359832">
        <id>P61981</id>
        <label>YWHAG</label>
    </interactant>
    <organismsDiffer>false</organismsDiffer>
    <experiments>5</experiments>
</comment>
<comment type="subcellular location">
    <subcellularLocation>
        <location evidence="1">Synapse</location>
    </subcellularLocation>
</comment>
<comment type="alternative products">
    <event type="alternative splicing"/>
    <isoform>
        <id>Q9UJD0-1</id>
        <name>1</name>
        <sequence type="displayed"/>
    </isoform>
    <isoform>
        <id>Q9UJD0-2</id>
        <name>2</name>
        <sequence type="described" ref="VSP_055836 VSP_055837"/>
    </isoform>
</comment>
<comment type="sequence caution" evidence="6">
    <conflict type="erroneous initiation">
        <sequence resource="EMBL-CDS" id="BAA13243"/>
    </conflict>
</comment>
<accession>Q9UJD0</accession>
<accession>D3DPV8</accession>
<accession>Q92511</accession>
<accession>X5D7U7</accession>
<gene>
    <name type="primary">RIMS3</name>
    <name type="synonym">KIAA0237</name>
</gene>
<proteinExistence type="evidence at protein level"/>
<reference key="1">
    <citation type="journal article" date="2003" name="Genomics">
        <title>Genomic definition of RIM proteins: evolutionary amplification of a family of synaptic regulatory proteins.</title>
        <authorList>
            <person name="Wang Y."/>
            <person name="Suedhof T.C."/>
        </authorList>
    </citation>
    <scope>NUCLEOTIDE SEQUENCE [MRNA] (ISOFORM 1)</scope>
</reference>
<reference key="2">
    <citation type="journal article" date="2014" name="Nat. Commun.">
        <title>Protein interaction network of alternatively spliced isoforms from brain links genetic risk factors for autism.</title>
        <authorList>
            <person name="Corominas R."/>
            <person name="Yang X."/>
            <person name="Lin G.N."/>
            <person name="Kang S."/>
            <person name="Shen Y."/>
            <person name="Ghamsari L."/>
            <person name="Broly M."/>
            <person name="Rodriguez M."/>
            <person name="Tam S."/>
            <person name="Wanamaker S.A."/>
            <person name="Fan C."/>
            <person name="Yi S."/>
            <person name="Tasan M."/>
            <person name="Lemmens I."/>
            <person name="Kuang X."/>
            <person name="Zhao N."/>
            <person name="Malhotra D."/>
            <person name="Michaelson J.J."/>
            <person name="Vacic V."/>
            <person name="Calderwood M.A."/>
            <person name="Roth F.P."/>
            <person name="Tavernier J."/>
            <person name="Horvath S."/>
            <person name="Salehi-Ashtiani K."/>
            <person name="Korkin D."/>
            <person name="Sebat J."/>
            <person name="Hill D.E."/>
            <person name="Hao T."/>
            <person name="Vidal M."/>
            <person name="Iakoucheva L.M."/>
        </authorList>
    </citation>
    <scope>NUCLEOTIDE SEQUENCE [MRNA] (ISOFORM 2)</scope>
    <scope>ALTERNATIVE SPLICING</scope>
    <source>
        <tissue>Fetal brain</tissue>
    </source>
</reference>
<reference key="3">
    <citation type="journal article" date="1996" name="DNA Res.">
        <title>Prediction of the coding sequences of unidentified human genes. VI. The coding sequences of 80 new genes (KIAA0201-KIAA0280) deduced by analysis of cDNA clones from cell line KG-1 and brain.</title>
        <authorList>
            <person name="Nagase T."/>
            <person name="Seki N."/>
            <person name="Ishikawa K."/>
            <person name="Ohira M."/>
            <person name="Kawarabayasi Y."/>
            <person name="Ohara O."/>
            <person name="Tanaka A."/>
            <person name="Kotani H."/>
            <person name="Miyajima N."/>
            <person name="Nomura N."/>
        </authorList>
    </citation>
    <scope>NUCLEOTIDE SEQUENCE [LARGE SCALE MRNA] (ISOFORM 1)</scope>
    <source>
        <tissue>Bone marrow</tissue>
    </source>
</reference>
<reference key="4">
    <citation type="journal article" date="2006" name="Nature">
        <title>The DNA sequence and biological annotation of human chromosome 1.</title>
        <authorList>
            <person name="Gregory S.G."/>
            <person name="Barlow K.F."/>
            <person name="McLay K.E."/>
            <person name="Kaul R."/>
            <person name="Swarbreck D."/>
            <person name="Dunham A."/>
            <person name="Scott C.E."/>
            <person name="Howe K.L."/>
            <person name="Woodfine K."/>
            <person name="Spencer C.C.A."/>
            <person name="Jones M.C."/>
            <person name="Gillson C."/>
            <person name="Searle S."/>
            <person name="Zhou Y."/>
            <person name="Kokocinski F."/>
            <person name="McDonald L."/>
            <person name="Evans R."/>
            <person name="Phillips K."/>
            <person name="Atkinson A."/>
            <person name="Cooper R."/>
            <person name="Jones C."/>
            <person name="Hall R.E."/>
            <person name="Andrews T.D."/>
            <person name="Lloyd C."/>
            <person name="Ainscough R."/>
            <person name="Almeida J.P."/>
            <person name="Ambrose K.D."/>
            <person name="Anderson F."/>
            <person name="Andrew R.W."/>
            <person name="Ashwell R.I.S."/>
            <person name="Aubin K."/>
            <person name="Babbage A.K."/>
            <person name="Bagguley C.L."/>
            <person name="Bailey J."/>
            <person name="Beasley H."/>
            <person name="Bethel G."/>
            <person name="Bird C.P."/>
            <person name="Bray-Allen S."/>
            <person name="Brown J.Y."/>
            <person name="Brown A.J."/>
            <person name="Buckley D."/>
            <person name="Burton J."/>
            <person name="Bye J."/>
            <person name="Carder C."/>
            <person name="Chapman J.C."/>
            <person name="Clark S.Y."/>
            <person name="Clarke G."/>
            <person name="Clee C."/>
            <person name="Cobley V."/>
            <person name="Collier R.E."/>
            <person name="Corby N."/>
            <person name="Coville G.J."/>
            <person name="Davies J."/>
            <person name="Deadman R."/>
            <person name="Dunn M."/>
            <person name="Earthrowl M."/>
            <person name="Ellington A.G."/>
            <person name="Errington H."/>
            <person name="Frankish A."/>
            <person name="Frankland J."/>
            <person name="French L."/>
            <person name="Garner P."/>
            <person name="Garnett J."/>
            <person name="Gay L."/>
            <person name="Ghori M.R.J."/>
            <person name="Gibson R."/>
            <person name="Gilby L.M."/>
            <person name="Gillett W."/>
            <person name="Glithero R.J."/>
            <person name="Grafham D.V."/>
            <person name="Griffiths C."/>
            <person name="Griffiths-Jones S."/>
            <person name="Grocock R."/>
            <person name="Hammond S."/>
            <person name="Harrison E.S.I."/>
            <person name="Hart E."/>
            <person name="Haugen E."/>
            <person name="Heath P.D."/>
            <person name="Holmes S."/>
            <person name="Holt K."/>
            <person name="Howden P.J."/>
            <person name="Hunt A.R."/>
            <person name="Hunt S.E."/>
            <person name="Hunter G."/>
            <person name="Isherwood J."/>
            <person name="James R."/>
            <person name="Johnson C."/>
            <person name="Johnson D."/>
            <person name="Joy A."/>
            <person name="Kay M."/>
            <person name="Kershaw J.K."/>
            <person name="Kibukawa M."/>
            <person name="Kimberley A.M."/>
            <person name="King A."/>
            <person name="Knights A.J."/>
            <person name="Lad H."/>
            <person name="Laird G."/>
            <person name="Lawlor S."/>
            <person name="Leongamornlert D.A."/>
            <person name="Lloyd D.M."/>
            <person name="Loveland J."/>
            <person name="Lovell J."/>
            <person name="Lush M.J."/>
            <person name="Lyne R."/>
            <person name="Martin S."/>
            <person name="Mashreghi-Mohammadi M."/>
            <person name="Matthews L."/>
            <person name="Matthews N.S.W."/>
            <person name="McLaren S."/>
            <person name="Milne S."/>
            <person name="Mistry S."/>
            <person name="Moore M.J.F."/>
            <person name="Nickerson T."/>
            <person name="O'Dell C.N."/>
            <person name="Oliver K."/>
            <person name="Palmeiri A."/>
            <person name="Palmer S.A."/>
            <person name="Parker A."/>
            <person name="Patel D."/>
            <person name="Pearce A.V."/>
            <person name="Peck A.I."/>
            <person name="Pelan S."/>
            <person name="Phelps K."/>
            <person name="Phillimore B.J."/>
            <person name="Plumb R."/>
            <person name="Rajan J."/>
            <person name="Raymond C."/>
            <person name="Rouse G."/>
            <person name="Saenphimmachak C."/>
            <person name="Sehra H.K."/>
            <person name="Sheridan E."/>
            <person name="Shownkeen R."/>
            <person name="Sims S."/>
            <person name="Skuce C.D."/>
            <person name="Smith M."/>
            <person name="Steward C."/>
            <person name="Subramanian S."/>
            <person name="Sycamore N."/>
            <person name="Tracey A."/>
            <person name="Tromans A."/>
            <person name="Van Helmond Z."/>
            <person name="Wall M."/>
            <person name="Wallis J.M."/>
            <person name="White S."/>
            <person name="Whitehead S.L."/>
            <person name="Wilkinson J.E."/>
            <person name="Willey D.L."/>
            <person name="Williams H."/>
            <person name="Wilming L."/>
            <person name="Wray P.W."/>
            <person name="Wu Z."/>
            <person name="Coulson A."/>
            <person name="Vaudin M."/>
            <person name="Sulston J.E."/>
            <person name="Durbin R.M."/>
            <person name="Hubbard T."/>
            <person name="Wooster R."/>
            <person name="Dunham I."/>
            <person name="Carter N.P."/>
            <person name="McVean G."/>
            <person name="Ross M.T."/>
            <person name="Harrow J."/>
            <person name="Olson M.V."/>
            <person name="Beck S."/>
            <person name="Rogers J."/>
            <person name="Bentley D.R."/>
        </authorList>
    </citation>
    <scope>NUCLEOTIDE SEQUENCE [LARGE SCALE GENOMIC DNA]</scope>
</reference>
<reference key="5">
    <citation type="submission" date="2005-09" db="EMBL/GenBank/DDBJ databases">
        <authorList>
            <person name="Mural R.J."/>
            <person name="Istrail S."/>
            <person name="Sutton G.G."/>
            <person name="Florea L."/>
            <person name="Halpern A.L."/>
            <person name="Mobarry C.M."/>
            <person name="Lippert R."/>
            <person name="Walenz B."/>
            <person name="Shatkay H."/>
            <person name="Dew I."/>
            <person name="Miller J.R."/>
            <person name="Flanigan M.J."/>
            <person name="Edwards N.J."/>
            <person name="Bolanos R."/>
            <person name="Fasulo D."/>
            <person name="Halldorsson B.V."/>
            <person name="Hannenhalli S."/>
            <person name="Turner R."/>
            <person name="Yooseph S."/>
            <person name="Lu F."/>
            <person name="Nusskern D.R."/>
            <person name="Shue B.C."/>
            <person name="Zheng X.H."/>
            <person name="Zhong F."/>
            <person name="Delcher A.L."/>
            <person name="Huson D.H."/>
            <person name="Kravitz S.A."/>
            <person name="Mouchard L."/>
            <person name="Reinert K."/>
            <person name="Remington K.A."/>
            <person name="Clark A.G."/>
            <person name="Waterman M.S."/>
            <person name="Eichler E.E."/>
            <person name="Adams M.D."/>
            <person name="Hunkapiller M.W."/>
            <person name="Myers E.W."/>
            <person name="Venter J.C."/>
        </authorList>
    </citation>
    <scope>NUCLEOTIDE SEQUENCE [LARGE SCALE GENOMIC DNA]</scope>
</reference>
<reference key="6">
    <citation type="journal article" date="2004" name="Genome Res.">
        <title>The status, quality, and expansion of the NIH full-length cDNA project: the Mammalian Gene Collection (MGC).</title>
        <authorList>
            <consortium name="The MGC Project Team"/>
        </authorList>
    </citation>
    <scope>NUCLEOTIDE SEQUENCE [LARGE SCALE MRNA] (ISOFORM 1)</scope>
    <source>
        <tissue>Brain</tissue>
    </source>
</reference>
<reference key="7">
    <citation type="journal article" date="2007" name="Science">
        <title>ATM and ATR substrate analysis reveals extensive protein networks responsive to DNA damage.</title>
        <authorList>
            <person name="Matsuoka S."/>
            <person name="Ballif B.A."/>
            <person name="Smogorzewska A."/>
            <person name="McDonald E.R. III"/>
            <person name="Hurov K.E."/>
            <person name="Luo J."/>
            <person name="Bakalarski C.E."/>
            <person name="Zhao Z."/>
            <person name="Solimini N."/>
            <person name="Lerenthal Y."/>
            <person name="Shiloh Y."/>
            <person name="Gygi S.P."/>
            <person name="Elledge S.J."/>
        </authorList>
    </citation>
    <scope>IDENTIFICATION BY MASS SPECTROMETRY [LARGE SCALE ANALYSIS]</scope>
    <source>
        <tissue>Embryonic kidney</tissue>
    </source>
</reference>
<evidence type="ECO:0000250" key="1"/>
<evidence type="ECO:0000250" key="2">
    <source>
        <dbReference type="UniProtKB" id="Q80U57"/>
    </source>
</evidence>
<evidence type="ECO:0000255" key="3">
    <source>
        <dbReference type="PROSITE-ProRule" id="PRU00041"/>
    </source>
</evidence>
<evidence type="ECO:0000256" key="4">
    <source>
        <dbReference type="SAM" id="MobiDB-lite"/>
    </source>
</evidence>
<evidence type="ECO:0000303" key="5">
    <source>
    </source>
</evidence>
<evidence type="ECO:0000305" key="6"/>
<dbReference type="EMBL" id="AY326956">
    <property type="protein sequence ID" value="AAQ01683.1"/>
    <property type="molecule type" value="mRNA"/>
</dbReference>
<dbReference type="EMBL" id="KJ535026">
    <property type="protein sequence ID" value="AHW56665.1"/>
    <property type="molecule type" value="mRNA"/>
</dbReference>
<dbReference type="EMBL" id="D87074">
    <property type="protein sequence ID" value="BAA13243.2"/>
    <property type="status" value="ALT_INIT"/>
    <property type="molecule type" value="mRNA"/>
</dbReference>
<dbReference type="EMBL" id="AL031289">
    <property type="status" value="NOT_ANNOTATED_CDS"/>
    <property type="molecule type" value="Genomic_DNA"/>
</dbReference>
<dbReference type="EMBL" id="CH471059">
    <property type="protein sequence ID" value="EAX07206.1"/>
    <property type="molecule type" value="Genomic_DNA"/>
</dbReference>
<dbReference type="EMBL" id="CH471059">
    <property type="protein sequence ID" value="EAX07207.1"/>
    <property type="molecule type" value="Genomic_DNA"/>
</dbReference>
<dbReference type="EMBL" id="BC003103">
    <property type="protein sequence ID" value="AAH03103.1"/>
    <property type="molecule type" value="mRNA"/>
</dbReference>
<dbReference type="CCDS" id="CCDS30687.1">
    <molecule id="Q9UJD0-1"/>
</dbReference>
<dbReference type="RefSeq" id="NP_055562.2">
    <molecule id="Q9UJD0-1"/>
    <property type="nucleotide sequence ID" value="NM_014747.2"/>
</dbReference>
<dbReference type="RefSeq" id="XP_047291140.1">
    <molecule id="Q9UJD0-1"/>
    <property type="nucleotide sequence ID" value="XM_047435184.1"/>
</dbReference>
<dbReference type="RefSeq" id="XP_047291145.1">
    <molecule id="Q9UJD0-1"/>
    <property type="nucleotide sequence ID" value="XM_047435189.1"/>
</dbReference>
<dbReference type="RefSeq" id="XP_054195753.1">
    <molecule id="Q9UJD0-1"/>
    <property type="nucleotide sequence ID" value="XM_054339778.1"/>
</dbReference>
<dbReference type="SMR" id="Q9UJD0"/>
<dbReference type="BioGRID" id="115127">
    <property type="interactions" value="13"/>
</dbReference>
<dbReference type="FunCoup" id="Q9UJD0">
    <property type="interactions" value="148"/>
</dbReference>
<dbReference type="IntAct" id="Q9UJD0">
    <property type="interactions" value="19"/>
</dbReference>
<dbReference type="MINT" id="Q9UJD0"/>
<dbReference type="STRING" id="9606.ENSP00000361769"/>
<dbReference type="iPTMnet" id="Q9UJD0"/>
<dbReference type="PhosphoSitePlus" id="Q9UJD0"/>
<dbReference type="SwissPalm" id="Q9UJD0"/>
<dbReference type="BioMuta" id="RIMS3"/>
<dbReference type="DMDM" id="41017811"/>
<dbReference type="jPOST" id="Q9UJD0"/>
<dbReference type="MassIVE" id="Q9UJD0"/>
<dbReference type="PaxDb" id="9606-ENSP00000361769"/>
<dbReference type="PeptideAtlas" id="Q9UJD0"/>
<dbReference type="ProteomicsDB" id="84619">
    <molecule id="Q9UJD0-1"/>
</dbReference>
<dbReference type="Antibodypedia" id="18011">
    <property type="antibodies" value="101 antibodies from 28 providers"/>
</dbReference>
<dbReference type="DNASU" id="9783"/>
<dbReference type="Ensembl" id="ENST00000372683.1">
    <molecule id="Q9UJD0-1"/>
    <property type="protein sequence ID" value="ENSP00000361768.1"/>
    <property type="gene ID" value="ENSG00000117016.10"/>
</dbReference>
<dbReference type="Ensembl" id="ENST00000372684.8">
    <molecule id="Q9UJD0-1"/>
    <property type="protein sequence ID" value="ENSP00000361769.3"/>
    <property type="gene ID" value="ENSG00000117016.10"/>
</dbReference>
<dbReference type="GeneID" id="9783"/>
<dbReference type="KEGG" id="hsa:9783"/>
<dbReference type="MANE-Select" id="ENST00000372684.8">
    <property type="protein sequence ID" value="ENSP00000361769.3"/>
    <property type="RefSeq nucleotide sequence ID" value="NM_014747.3"/>
    <property type="RefSeq protein sequence ID" value="NP_055562.2"/>
</dbReference>
<dbReference type="UCSC" id="uc001cfu.2">
    <molecule id="Q9UJD0-1"/>
    <property type="organism name" value="human"/>
</dbReference>
<dbReference type="AGR" id="HGNC:21292"/>
<dbReference type="CTD" id="9783"/>
<dbReference type="DisGeNET" id="9783"/>
<dbReference type="GeneCards" id="RIMS3"/>
<dbReference type="HGNC" id="HGNC:21292">
    <property type="gene designation" value="RIMS3"/>
</dbReference>
<dbReference type="HPA" id="ENSG00000117016">
    <property type="expression patterns" value="Tissue enriched (brain)"/>
</dbReference>
<dbReference type="MalaCards" id="RIMS3"/>
<dbReference type="MIM" id="611600">
    <property type="type" value="gene"/>
</dbReference>
<dbReference type="neXtProt" id="NX_Q9UJD0"/>
<dbReference type="OpenTargets" id="ENSG00000117016"/>
<dbReference type="PharmGKB" id="PA134980870"/>
<dbReference type="VEuPathDB" id="HostDB:ENSG00000117016"/>
<dbReference type="eggNOG" id="KOG2060">
    <property type="taxonomic scope" value="Eukaryota"/>
</dbReference>
<dbReference type="GeneTree" id="ENSGT00940000159332"/>
<dbReference type="HOGENOM" id="CLU_071205_0_0_1"/>
<dbReference type="InParanoid" id="Q9UJD0"/>
<dbReference type="OMA" id="GTMYSLE"/>
<dbReference type="OrthoDB" id="420032at2759"/>
<dbReference type="PAN-GO" id="Q9UJD0">
    <property type="GO annotations" value="7 GO annotations based on evolutionary models"/>
</dbReference>
<dbReference type="PhylomeDB" id="Q9UJD0"/>
<dbReference type="TreeFam" id="TF315600"/>
<dbReference type="PathwayCommons" id="Q9UJD0"/>
<dbReference type="SignaLink" id="Q9UJD0"/>
<dbReference type="SIGNOR" id="Q9UJD0"/>
<dbReference type="BioGRID-ORCS" id="9783">
    <property type="hits" value="8 hits in 1068 CRISPR screens"/>
</dbReference>
<dbReference type="ChiTaRS" id="RIMS3">
    <property type="organism name" value="human"/>
</dbReference>
<dbReference type="GenomeRNAi" id="9783"/>
<dbReference type="Pharos" id="Q9UJD0">
    <property type="development level" value="Tbio"/>
</dbReference>
<dbReference type="PRO" id="PR:Q9UJD0"/>
<dbReference type="Proteomes" id="UP000005640">
    <property type="component" value="Chromosome 1"/>
</dbReference>
<dbReference type="RNAct" id="Q9UJD0">
    <property type="molecule type" value="protein"/>
</dbReference>
<dbReference type="Bgee" id="ENSG00000117016">
    <property type="expression patterns" value="Expressed in middle temporal gyrus and 157 other cell types or tissues"/>
</dbReference>
<dbReference type="GO" id="GO:0048786">
    <property type="term" value="C:presynaptic active zone"/>
    <property type="evidence" value="ECO:0000304"/>
    <property type="project" value="ParkinsonsUK-UCL"/>
</dbReference>
<dbReference type="GO" id="GO:0098831">
    <property type="term" value="C:presynaptic active zone cytoplasmic component"/>
    <property type="evidence" value="ECO:0000318"/>
    <property type="project" value="GO_Central"/>
</dbReference>
<dbReference type="GO" id="GO:0042734">
    <property type="term" value="C:presynaptic membrane"/>
    <property type="evidence" value="ECO:0000318"/>
    <property type="project" value="GO_Central"/>
</dbReference>
<dbReference type="GO" id="GO:0031267">
    <property type="term" value="F:small GTPase binding"/>
    <property type="evidence" value="ECO:0007669"/>
    <property type="project" value="InterPro"/>
</dbReference>
<dbReference type="GO" id="GO:0098882">
    <property type="term" value="F:structural constituent of presynaptic active zone"/>
    <property type="evidence" value="ECO:0000318"/>
    <property type="project" value="GO_Central"/>
</dbReference>
<dbReference type="GO" id="GO:0044325">
    <property type="term" value="F:transmembrane transporter binding"/>
    <property type="evidence" value="ECO:0000250"/>
    <property type="project" value="ParkinsonsUK-UCL"/>
</dbReference>
<dbReference type="GO" id="GO:0017156">
    <property type="term" value="P:calcium-ion regulated exocytosis"/>
    <property type="evidence" value="ECO:0000250"/>
    <property type="project" value="ParkinsonsUK-UCL"/>
</dbReference>
<dbReference type="GO" id="GO:0042391">
    <property type="term" value="P:regulation of membrane potential"/>
    <property type="evidence" value="ECO:0000250"/>
    <property type="project" value="ParkinsonsUK-UCL"/>
</dbReference>
<dbReference type="GO" id="GO:2000300">
    <property type="term" value="P:regulation of synaptic vesicle exocytosis"/>
    <property type="evidence" value="ECO:0000250"/>
    <property type="project" value="ParkinsonsUK-UCL"/>
</dbReference>
<dbReference type="GO" id="GO:0016081">
    <property type="term" value="P:synaptic vesicle docking"/>
    <property type="evidence" value="ECO:0000318"/>
    <property type="project" value="GO_Central"/>
</dbReference>
<dbReference type="GO" id="GO:0016082">
    <property type="term" value="P:synaptic vesicle priming"/>
    <property type="evidence" value="ECO:0000318"/>
    <property type="project" value="GO_Central"/>
</dbReference>
<dbReference type="FunFam" id="2.60.40.150:FF:000001">
    <property type="entry name" value="Regulating synaptic membrane exocytosis 3, isoform CRA_a"/>
    <property type="match status" value="1"/>
</dbReference>
<dbReference type="Gene3D" id="2.60.40.150">
    <property type="entry name" value="C2 domain"/>
    <property type="match status" value="1"/>
</dbReference>
<dbReference type="InterPro" id="IPR000008">
    <property type="entry name" value="C2_dom"/>
</dbReference>
<dbReference type="InterPro" id="IPR035892">
    <property type="entry name" value="C2_domain_sf"/>
</dbReference>
<dbReference type="InterPro" id="IPR039032">
    <property type="entry name" value="Rim-like"/>
</dbReference>
<dbReference type="PANTHER" id="PTHR12157">
    <property type="entry name" value="REGULATING SYNAPTIC MEMBRANE EXOCYTOSIS PROTEIN"/>
    <property type="match status" value="1"/>
</dbReference>
<dbReference type="PANTHER" id="PTHR12157:SF25">
    <property type="entry name" value="REGULATING SYNAPTIC MEMBRANE EXOCYTOSIS PROTEIN 3"/>
    <property type="match status" value="1"/>
</dbReference>
<dbReference type="Pfam" id="PF00168">
    <property type="entry name" value="C2"/>
    <property type="match status" value="1"/>
</dbReference>
<dbReference type="SMART" id="SM00239">
    <property type="entry name" value="C2"/>
    <property type="match status" value="1"/>
</dbReference>
<dbReference type="SUPFAM" id="SSF49562">
    <property type="entry name" value="C2 domain (Calcium/lipid-binding domain, CaLB)"/>
    <property type="match status" value="1"/>
</dbReference>
<dbReference type="PROSITE" id="PS50004">
    <property type="entry name" value="C2"/>
    <property type="match status" value="1"/>
</dbReference>
<protein>
    <recommendedName>
        <fullName>Regulating synaptic membrane exocytosis protein 3</fullName>
        <shortName>Nim3</shortName>
    </recommendedName>
    <alternativeName>
        <fullName>RIM3 gamma</fullName>
    </alternativeName>
    <alternativeName>
        <fullName>Rab-3-interacting molecule 3</fullName>
        <shortName>RIM 3</shortName>
    </alternativeName>
</protein>
<feature type="chain" id="PRO_0000190204" description="Regulating synaptic membrane exocytosis protein 3">
    <location>
        <begin position="1"/>
        <end position="308"/>
    </location>
</feature>
<feature type="domain" description="C2" evidence="3">
    <location>
        <begin position="156"/>
        <end position="274"/>
    </location>
</feature>
<feature type="region of interest" description="Disordered" evidence="4">
    <location>
        <begin position="86"/>
        <end position="120"/>
    </location>
</feature>
<feature type="compositionally biased region" description="Low complexity" evidence="4">
    <location>
        <begin position="109"/>
        <end position="120"/>
    </location>
</feature>
<feature type="modified residue" description="Phosphoserine" evidence="2">
    <location>
        <position position="295"/>
    </location>
</feature>
<feature type="modified residue" description="Phosphoserine" evidence="2">
    <location>
        <position position="298"/>
    </location>
</feature>
<feature type="splice variant" id="VSP_055836" description="In isoform 2." evidence="5">
    <original>FIFPTTRLGAESQFSDFLDGLGPAQIVGRQTLA</original>
    <variation>CVQPRAVVPSLLLGPPVTEPLGRVHLPHYPARG</variation>
    <location>
        <begin position="121"/>
        <end position="153"/>
    </location>
</feature>
<feature type="splice variant" id="VSP_055837" description="In isoform 2." evidence="5">
    <location>
        <begin position="154"/>
        <end position="308"/>
    </location>
</feature>
<feature type="sequence conflict" description="In Ref. 3; BAA13243." evidence="6" ref="3">
    <original>S</original>
    <variation>G</variation>
    <location>
        <position position="24"/>
    </location>
</feature>
<organism>
    <name type="scientific">Homo sapiens</name>
    <name type="common">Human</name>
    <dbReference type="NCBI Taxonomy" id="9606"/>
    <lineage>
        <taxon>Eukaryota</taxon>
        <taxon>Metazoa</taxon>
        <taxon>Chordata</taxon>
        <taxon>Craniata</taxon>
        <taxon>Vertebrata</taxon>
        <taxon>Euteleostomi</taxon>
        <taxon>Mammalia</taxon>
        <taxon>Eutheria</taxon>
        <taxon>Euarchontoglires</taxon>
        <taxon>Primates</taxon>
        <taxon>Haplorrhini</taxon>
        <taxon>Catarrhini</taxon>
        <taxon>Hominidae</taxon>
        <taxon>Homo</taxon>
    </lineage>
</organism>
<keyword id="KW-0025">Alternative splicing</keyword>
<keyword id="KW-0268">Exocytosis</keyword>
<keyword id="KW-0532">Neurotransmitter transport</keyword>
<keyword id="KW-0597">Phosphoprotein</keyword>
<keyword id="KW-1267">Proteomics identification</keyword>
<keyword id="KW-1185">Reference proteome</keyword>
<keyword id="KW-0770">Synapse</keyword>
<keyword id="KW-0813">Transport</keyword>